<proteinExistence type="inferred from homology"/>
<accession>B5XJX2</accession>
<comment type="subcellular location">
    <subcellularLocation>
        <location evidence="1">Cell membrane</location>
        <topology evidence="1">Single-pass membrane protein</topology>
    </subcellularLocation>
</comment>
<comment type="similarity">
    <text evidence="1">Belongs to the UPF0154 family.</text>
</comment>
<name>Y296_STRPZ</name>
<sequence length="80" mass="8894">MSTAIWILLLIVALGVGVFGGIFIARKQIEKEIGEHPRLTPEAIREMMSQMGQKPSEAKIQQTYRNIIKQSKAAVSKGKK</sequence>
<reference key="1">
    <citation type="journal article" date="2008" name="J. Bacteriol.">
        <title>Genome sequence of a nephritogenic and highly transformable M49 strain of Streptococcus pyogenes.</title>
        <authorList>
            <person name="McShan W.M."/>
            <person name="Ferretti J.J."/>
            <person name="Karasawa T."/>
            <person name="Suvorov A.N."/>
            <person name="Lin S."/>
            <person name="Qin B."/>
            <person name="Jia H."/>
            <person name="Kenton S."/>
            <person name="Najar F."/>
            <person name="Wu H."/>
            <person name="Scott J."/>
            <person name="Roe B.A."/>
            <person name="Savic D.J."/>
        </authorList>
    </citation>
    <scope>NUCLEOTIDE SEQUENCE [LARGE SCALE GENOMIC DNA]</scope>
    <source>
        <strain>NZ131</strain>
    </source>
</reference>
<organism>
    <name type="scientific">Streptococcus pyogenes serotype M49 (strain NZ131)</name>
    <dbReference type="NCBI Taxonomy" id="471876"/>
    <lineage>
        <taxon>Bacteria</taxon>
        <taxon>Bacillati</taxon>
        <taxon>Bacillota</taxon>
        <taxon>Bacilli</taxon>
        <taxon>Lactobacillales</taxon>
        <taxon>Streptococcaceae</taxon>
        <taxon>Streptococcus</taxon>
    </lineage>
</organism>
<protein>
    <recommendedName>
        <fullName evidence="1">UPF0154 protein Spy49_0296</fullName>
    </recommendedName>
</protein>
<evidence type="ECO:0000255" key="1">
    <source>
        <dbReference type="HAMAP-Rule" id="MF_00363"/>
    </source>
</evidence>
<dbReference type="EMBL" id="CP000829">
    <property type="protein sequence ID" value="ACI60634.1"/>
    <property type="molecule type" value="Genomic_DNA"/>
</dbReference>
<dbReference type="SMR" id="B5XJX2"/>
<dbReference type="KEGG" id="soz:Spy49_0296"/>
<dbReference type="HOGENOM" id="CLU_180108_0_0_9"/>
<dbReference type="Proteomes" id="UP000001039">
    <property type="component" value="Chromosome"/>
</dbReference>
<dbReference type="GO" id="GO:0005886">
    <property type="term" value="C:plasma membrane"/>
    <property type="evidence" value="ECO:0007669"/>
    <property type="project" value="UniProtKB-SubCell"/>
</dbReference>
<dbReference type="HAMAP" id="MF_00363">
    <property type="entry name" value="UPF0154"/>
    <property type="match status" value="1"/>
</dbReference>
<dbReference type="InterPro" id="IPR005359">
    <property type="entry name" value="UPF0154"/>
</dbReference>
<dbReference type="Pfam" id="PF03672">
    <property type="entry name" value="UPF0154"/>
    <property type="match status" value="1"/>
</dbReference>
<keyword id="KW-1003">Cell membrane</keyword>
<keyword id="KW-0472">Membrane</keyword>
<keyword id="KW-0812">Transmembrane</keyword>
<keyword id="KW-1133">Transmembrane helix</keyword>
<gene>
    <name type="ordered locus">Spy49_0296</name>
</gene>
<feature type="chain" id="PRO_1000121050" description="UPF0154 protein Spy49_0296">
    <location>
        <begin position="1"/>
        <end position="80"/>
    </location>
</feature>
<feature type="transmembrane region" description="Helical" evidence="1">
    <location>
        <begin position="4"/>
        <end position="24"/>
    </location>
</feature>